<dbReference type="EC" id="4.2.99.20" evidence="1"/>
<dbReference type="EMBL" id="AP009240">
    <property type="protein sequence ID" value="BAG78047.1"/>
    <property type="molecule type" value="Genomic_DNA"/>
</dbReference>
<dbReference type="RefSeq" id="WP_000600492.1">
    <property type="nucleotide sequence ID" value="NC_011415.1"/>
</dbReference>
<dbReference type="SMR" id="B6I7K7"/>
<dbReference type="ESTHER" id="ecoli-YFBB">
    <property type="family name" value="MenH_SHCHC"/>
</dbReference>
<dbReference type="MEROPS" id="S33.996"/>
<dbReference type="KEGG" id="ecy:ECSE_2523"/>
<dbReference type="HOGENOM" id="CLU_020336_38_2_6"/>
<dbReference type="UniPathway" id="UPA00079"/>
<dbReference type="UniPathway" id="UPA01057">
    <property type="reaction ID" value="UER00900"/>
</dbReference>
<dbReference type="Proteomes" id="UP000008199">
    <property type="component" value="Chromosome"/>
</dbReference>
<dbReference type="GO" id="GO:0070205">
    <property type="term" value="F:2-succinyl-6-hydroxy-2,4-cyclohexadiene-1-carboxylate synthase activity"/>
    <property type="evidence" value="ECO:0007669"/>
    <property type="project" value="UniProtKB-UniRule"/>
</dbReference>
<dbReference type="GO" id="GO:0009234">
    <property type="term" value="P:menaquinone biosynthetic process"/>
    <property type="evidence" value="ECO:0007669"/>
    <property type="project" value="UniProtKB-UniRule"/>
</dbReference>
<dbReference type="FunFam" id="3.40.50.1820:FF:000038">
    <property type="entry name" value="2-succinyl-6-hydroxy-2,4-cyclohexadiene-1-carboxylate synthase"/>
    <property type="match status" value="1"/>
</dbReference>
<dbReference type="Gene3D" id="3.40.50.1820">
    <property type="entry name" value="alpha/beta hydrolase"/>
    <property type="match status" value="1"/>
</dbReference>
<dbReference type="HAMAP" id="MF_01660">
    <property type="entry name" value="MenH"/>
    <property type="match status" value="1"/>
</dbReference>
<dbReference type="InterPro" id="IPR000073">
    <property type="entry name" value="AB_hydrolase_1"/>
</dbReference>
<dbReference type="InterPro" id="IPR029058">
    <property type="entry name" value="AB_hydrolase_fold"/>
</dbReference>
<dbReference type="InterPro" id="IPR022485">
    <property type="entry name" value="SHCHC_synthase_MenH"/>
</dbReference>
<dbReference type="NCBIfam" id="TIGR03695">
    <property type="entry name" value="menH_SHCHC"/>
    <property type="match status" value="1"/>
</dbReference>
<dbReference type="NCBIfam" id="NF008340">
    <property type="entry name" value="PRK11126.1"/>
    <property type="match status" value="1"/>
</dbReference>
<dbReference type="PANTHER" id="PTHR42916">
    <property type="entry name" value="2-SUCCINYL-5-ENOLPYRUVYL-6-HYDROXY-3-CYCLOHEXENE-1-CARBOXYLATE SYNTHASE"/>
    <property type="match status" value="1"/>
</dbReference>
<dbReference type="PANTHER" id="PTHR42916:SF1">
    <property type="entry name" value="PROTEIN PHYLLO, CHLOROPLASTIC"/>
    <property type="match status" value="1"/>
</dbReference>
<dbReference type="Pfam" id="PF12697">
    <property type="entry name" value="Abhydrolase_6"/>
    <property type="match status" value="1"/>
</dbReference>
<dbReference type="SUPFAM" id="SSF53474">
    <property type="entry name" value="alpha/beta-Hydrolases"/>
    <property type="match status" value="1"/>
</dbReference>
<protein>
    <recommendedName>
        <fullName evidence="1">2-succinyl-6-hydroxy-2,4-cyclohexadiene-1-carboxylate synthase</fullName>
        <shortName evidence="1">SHCHC synthase</shortName>
        <ecNumber evidence="1">4.2.99.20</ecNumber>
    </recommendedName>
</protein>
<gene>
    <name evidence="1" type="primary">menH</name>
    <name type="ordered locus">ECSE_2523</name>
</gene>
<proteinExistence type="inferred from homology"/>
<feature type="chain" id="PRO_1000187111" description="2-succinyl-6-hydroxy-2,4-cyclohexadiene-1-carboxylate synthase">
    <location>
        <begin position="1"/>
        <end position="252"/>
    </location>
</feature>
<organism>
    <name type="scientific">Escherichia coli (strain SE11)</name>
    <dbReference type="NCBI Taxonomy" id="409438"/>
    <lineage>
        <taxon>Bacteria</taxon>
        <taxon>Pseudomonadati</taxon>
        <taxon>Pseudomonadota</taxon>
        <taxon>Gammaproteobacteria</taxon>
        <taxon>Enterobacterales</taxon>
        <taxon>Enterobacteriaceae</taxon>
        <taxon>Escherichia</taxon>
    </lineage>
</organism>
<accession>B6I7K7</accession>
<name>MENH_ECOSE</name>
<sequence length="252" mass="27644">MILHAQAKHGKPGLPWLVFLHGFSGDCHEWQEVGEAFADYSRLYVDLPGHGGSAAISVDGFDDVTDLLRKTLVSYNILDFWLVGYSLGGRVAMMAACQGLAGLCGVIVEGGHPGLQNAEQRAERQRSDRQWAQRFCTEPLTAVFADWYQQPVFASLNDDQRRELVALRSNNNGATLAAMLEATSLAVQPDLRANLSARTFAFYYLCGERDSKFRALAAELAADCHVIPRAGHNAHRENPAGVIASLAQILRF</sequence>
<evidence type="ECO:0000255" key="1">
    <source>
        <dbReference type="HAMAP-Rule" id="MF_01660"/>
    </source>
</evidence>
<reference key="1">
    <citation type="journal article" date="2008" name="DNA Res.">
        <title>Complete genome sequence and comparative analysis of the wild-type commensal Escherichia coli strain SE11 isolated from a healthy adult.</title>
        <authorList>
            <person name="Oshima K."/>
            <person name="Toh H."/>
            <person name="Ogura Y."/>
            <person name="Sasamoto H."/>
            <person name="Morita H."/>
            <person name="Park S.-H."/>
            <person name="Ooka T."/>
            <person name="Iyoda S."/>
            <person name="Taylor T.D."/>
            <person name="Hayashi T."/>
            <person name="Itoh K."/>
            <person name="Hattori M."/>
        </authorList>
    </citation>
    <scope>NUCLEOTIDE SEQUENCE [LARGE SCALE GENOMIC DNA]</scope>
    <source>
        <strain>SE11</strain>
    </source>
</reference>
<comment type="function">
    <text evidence="1">Catalyzes a proton abstraction reaction that results in 2,5-elimination of pyruvate from 2-succinyl-5-enolpyruvyl-6-hydroxy-3-cyclohexene-1-carboxylate (SEPHCHC) and the formation of 2-succinyl-6-hydroxy-2,4-cyclohexadiene-1-carboxylate (SHCHC).</text>
</comment>
<comment type="catalytic activity">
    <reaction evidence="1">
        <text>5-enolpyruvoyl-6-hydroxy-2-succinyl-cyclohex-3-ene-1-carboxylate = (1R,6R)-6-hydroxy-2-succinyl-cyclohexa-2,4-diene-1-carboxylate + pyruvate</text>
        <dbReference type="Rhea" id="RHEA:25597"/>
        <dbReference type="ChEBI" id="CHEBI:15361"/>
        <dbReference type="ChEBI" id="CHEBI:58689"/>
        <dbReference type="ChEBI" id="CHEBI:58818"/>
        <dbReference type="EC" id="4.2.99.20"/>
    </reaction>
</comment>
<comment type="pathway">
    <text evidence="1">Quinol/quinone metabolism; 1,4-dihydroxy-2-naphthoate biosynthesis; 1,4-dihydroxy-2-naphthoate from chorismate: step 3/7.</text>
</comment>
<comment type="pathway">
    <text evidence="1">Quinol/quinone metabolism; menaquinone biosynthesis.</text>
</comment>
<comment type="subunit">
    <text evidence="1">Monomer.</text>
</comment>
<comment type="similarity">
    <text evidence="1">Belongs to the AB hydrolase superfamily. MenH family.</text>
</comment>
<keyword id="KW-0456">Lyase</keyword>
<keyword id="KW-0474">Menaquinone biosynthesis</keyword>